<accession>Q2K2T1</accession>
<reference key="1">
    <citation type="journal article" date="2006" name="Proc. Natl. Acad. Sci. U.S.A.">
        <title>The partitioned Rhizobium etli genome: genetic and metabolic redundancy in seven interacting replicons.</title>
        <authorList>
            <person name="Gonzalez V."/>
            <person name="Santamaria R.I."/>
            <person name="Bustos P."/>
            <person name="Hernandez-Gonzalez I."/>
            <person name="Medrano-Soto A."/>
            <person name="Moreno-Hagelsieb G."/>
            <person name="Janga S.C."/>
            <person name="Ramirez M.A."/>
            <person name="Jimenez-Jacinto V."/>
            <person name="Collado-Vides J."/>
            <person name="Davila G."/>
        </authorList>
    </citation>
    <scope>NUCLEOTIDE SEQUENCE [LARGE SCALE GENOMIC DNA]</scope>
    <source>
        <strain>ATCC 51251 / DSM 11541 / JCM 21823 / NBRC 15573 / CFN 42</strain>
    </source>
</reference>
<proteinExistence type="inferred from homology"/>
<organism>
    <name type="scientific">Rhizobium etli (strain ATCC 51251 / DSM 11541 / JCM 21823 / NBRC 15573 / CFN 42)</name>
    <dbReference type="NCBI Taxonomy" id="347834"/>
    <lineage>
        <taxon>Bacteria</taxon>
        <taxon>Pseudomonadati</taxon>
        <taxon>Pseudomonadota</taxon>
        <taxon>Alphaproteobacteria</taxon>
        <taxon>Hyphomicrobiales</taxon>
        <taxon>Rhizobiaceae</taxon>
        <taxon>Rhizobium/Agrobacterium group</taxon>
        <taxon>Rhizobium</taxon>
    </lineage>
</organism>
<gene>
    <name evidence="1" type="primary">acsA</name>
    <name type="ordered locus">RHE_CH04112</name>
</gene>
<feature type="chain" id="PRO_1000065310" description="Acetyl-coenzyme A synthetase">
    <location>
        <begin position="1"/>
        <end position="651"/>
    </location>
</feature>
<feature type="binding site" evidence="1">
    <location>
        <begin position="189"/>
        <end position="192"/>
    </location>
    <ligand>
        <name>CoA</name>
        <dbReference type="ChEBI" id="CHEBI:57287"/>
    </ligand>
</feature>
<feature type="binding site" evidence="1">
    <location>
        <position position="311"/>
    </location>
    <ligand>
        <name>CoA</name>
        <dbReference type="ChEBI" id="CHEBI:57287"/>
    </ligand>
</feature>
<feature type="binding site" evidence="1">
    <location>
        <position position="335"/>
    </location>
    <ligand>
        <name>CoA</name>
        <dbReference type="ChEBI" id="CHEBI:57287"/>
    </ligand>
</feature>
<feature type="binding site" evidence="1">
    <location>
        <begin position="387"/>
        <end position="389"/>
    </location>
    <ligand>
        <name>ATP</name>
        <dbReference type="ChEBI" id="CHEBI:30616"/>
    </ligand>
</feature>
<feature type="binding site" evidence="1">
    <location>
        <begin position="411"/>
        <end position="416"/>
    </location>
    <ligand>
        <name>ATP</name>
        <dbReference type="ChEBI" id="CHEBI:30616"/>
    </ligand>
</feature>
<feature type="binding site" evidence="1">
    <location>
        <position position="500"/>
    </location>
    <ligand>
        <name>ATP</name>
        <dbReference type="ChEBI" id="CHEBI:30616"/>
    </ligand>
</feature>
<feature type="binding site" evidence="1">
    <location>
        <position position="515"/>
    </location>
    <ligand>
        <name>ATP</name>
        <dbReference type="ChEBI" id="CHEBI:30616"/>
    </ligand>
</feature>
<feature type="binding site" evidence="1">
    <location>
        <position position="523"/>
    </location>
    <ligand>
        <name>CoA</name>
        <dbReference type="ChEBI" id="CHEBI:57287"/>
    </ligand>
</feature>
<feature type="binding site" evidence="1">
    <location>
        <position position="526"/>
    </location>
    <ligand>
        <name>ATP</name>
        <dbReference type="ChEBI" id="CHEBI:30616"/>
    </ligand>
</feature>
<feature type="binding site" evidence="1">
    <location>
        <position position="537"/>
    </location>
    <ligand>
        <name>Mg(2+)</name>
        <dbReference type="ChEBI" id="CHEBI:18420"/>
    </ligand>
</feature>
<feature type="binding site" evidence="1">
    <location>
        <position position="539"/>
    </location>
    <ligand>
        <name>Mg(2+)</name>
        <dbReference type="ChEBI" id="CHEBI:18420"/>
    </ligand>
</feature>
<feature type="binding site" evidence="1">
    <location>
        <position position="542"/>
    </location>
    <ligand>
        <name>Mg(2+)</name>
        <dbReference type="ChEBI" id="CHEBI:18420"/>
    </ligand>
</feature>
<feature type="binding site" evidence="1">
    <location>
        <position position="584"/>
    </location>
    <ligand>
        <name>CoA</name>
        <dbReference type="ChEBI" id="CHEBI:57287"/>
    </ligand>
</feature>
<feature type="modified residue" description="N6-acetyllysine" evidence="1">
    <location>
        <position position="609"/>
    </location>
</feature>
<evidence type="ECO:0000255" key="1">
    <source>
        <dbReference type="HAMAP-Rule" id="MF_01123"/>
    </source>
</evidence>
<sequence length="651" mass="72431">MSEKIHPVPKQVKAQALIDKEKYLKWYEESVENPDKFWGKHGKRIDWFKPYTKVKNTSFTGKVSIKWFEDGQTNVSYNCIDRHLKTNGDQVAIIWEGDNPYIDKKITYNELYEHVCRMANVLKKHGVKKGDRVTIYMPMIPEAAYAMLACARIGAVHSVVFGGFSPEALAGRIVDCESTFVITCDEGVRGGKPVPLKDNTDTAIHIAARQHVNVSKVLVVRRTGGKTGWAPGRDLWYHQEVATVKAECPPVKMKAEDPLFILYTSGSTGKPKGVLHTTGGYLVYASMTHEYVFDYHHGDIYWCTADVGWVTGHSYIVYGPLSNCATTLMFEGVPNFPDQGRFWEVIDKHKVNIFYTAPTAIRSLMGAGDDFVTRSSRSSLRLLGTVGEPINPEAWEWYYNVVGDKRCPVIDTWWQTETGGHMITPLPGAIDLKPGSATVPFFGVKPELVDNEGKVLEGAADGNLCIADSWPGQMRTVYGDHERFIQTYFSTYKGKYFTGDGCRRDEDGYYWITGRVDDVLNVSGHRLGTAEVESALVSHNLVSEAAVVGYPHAIKGQGIYCYVTLMAGHEGTDTLRQELVKHVRAEIGPIASPDKIQFAPGLPKTRSGKIMRRILRKIAEDDFGALGDTSTLADPAVVDDLIANRQNKATA</sequence>
<protein>
    <recommendedName>
        <fullName evidence="1">Acetyl-coenzyme A synthetase</fullName>
        <shortName evidence="1">AcCoA synthetase</shortName>
        <shortName evidence="1">Acs</shortName>
        <ecNumber evidence="1">6.2.1.1</ecNumber>
    </recommendedName>
    <alternativeName>
        <fullName evidence="1">Acetate--CoA ligase</fullName>
    </alternativeName>
    <alternativeName>
        <fullName evidence="1">Acyl-activating enzyme</fullName>
    </alternativeName>
</protein>
<dbReference type="EC" id="6.2.1.1" evidence="1"/>
<dbReference type="EMBL" id="CP000133">
    <property type="protein sequence ID" value="ABC92855.1"/>
    <property type="molecule type" value="Genomic_DNA"/>
</dbReference>
<dbReference type="SMR" id="Q2K2T1"/>
<dbReference type="KEGG" id="ret:RHE_CH04112"/>
<dbReference type="eggNOG" id="COG0365">
    <property type="taxonomic scope" value="Bacteria"/>
</dbReference>
<dbReference type="HOGENOM" id="CLU_000022_3_6_5"/>
<dbReference type="OrthoDB" id="9803968at2"/>
<dbReference type="Proteomes" id="UP000001936">
    <property type="component" value="Chromosome"/>
</dbReference>
<dbReference type="GO" id="GO:0005829">
    <property type="term" value="C:cytosol"/>
    <property type="evidence" value="ECO:0007669"/>
    <property type="project" value="TreeGrafter"/>
</dbReference>
<dbReference type="GO" id="GO:0003987">
    <property type="term" value="F:acetate-CoA ligase activity"/>
    <property type="evidence" value="ECO:0007669"/>
    <property type="project" value="UniProtKB-UniRule"/>
</dbReference>
<dbReference type="GO" id="GO:0016208">
    <property type="term" value="F:AMP binding"/>
    <property type="evidence" value="ECO:0007669"/>
    <property type="project" value="InterPro"/>
</dbReference>
<dbReference type="GO" id="GO:0005524">
    <property type="term" value="F:ATP binding"/>
    <property type="evidence" value="ECO:0007669"/>
    <property type="project" value="UniProtKB-KW"/>
</dbReference>
<dbReference type="GO" id="GO:0046872">
    <property type="term" value="F:metal ion binding"/>
    <property type="evidence" value="ECO:0007669"/>
    <property type="project" value="UniProtKB-KW"/>
</dbReference>
<dbReference type="GO" id="GO:0019427">
    <property type="term" value="P:acetyl-CoA biosynthetic process from acetate"/>
    <property type="evidence" value="ECO:0007669"/>
    <property type="project" value="InterPro"/>
</dbReference>
<dbReference type="CDD" id="cd05966">
    <property type="entry name" value="ACS"/>
    <property type="match status" value="1"/>
</dbReference>
<dbReference type="FunFam" id="3.30.300.30:FF:000004">
    <property type="entry name" value="Acetyl-coenzyme A synthetase"/>
    <property type="match status" value="1"/>
</dbReference>
<dbReference type="FunFam" id="3.40.50.12780:FF:000001">
    <property type="entry name" value="Acetyl-coenzyme A synthetase"/>
    <property type="match status" value="1"/>
</dbReference>
<dbReference type="Gene3D" id="3.30.300.30">
    <property type="match status" value="1"/>
</dbReference>
<dbReference type="Gene3D" id="3.40.50.12780">
    <property type="entry name" value="N-terminal domain of ligase-like"/>
    <property type="match status" value="1"/>
</dbReference>
<dbReference type="HAMAP" id="MF_01123">
    <property type="entry name" value="Ac_CoA_synth"/>
    <property type="match status" value="1"/>
</dbReference>
<dbReference type="InterPro" id="IPR011904">
    <property type="entry name" value="Ac_CoA_lig"/>
</dbReference>
<dbReference type="InterPro" id="IPR032387">
    <property type="entry name" value="ACAS_N"/>
</dbReference>
<dbReference type="InterPro" id="IPR025110">
    <property type="entry name" value="AMP-bd_C"/>
</dbReference>
<dbReference type="InterPro" id="IPR045851">
    <property type="entry name" value="AMP-bd_C_sf"/>
</dbReference>
<dbReference type="InterPro" id="IPR020845">
    <property type="entry name" value="AMP-binding_CS"/>
</dbReference>
<dbReference type="InterPro" id="IPR000873">
    <property type="entry name" value="AMP-dep_synth/lig_dom"/>
</dbReference>
<dbReference type="InterPro" id="IPR042099">
    <property type="entry name" value="ANL_N_sf"/>
</dbReference>
<dbReference type="NCBIfam" id="TIGR02188">
    <property type="entry name" value="Ac_CoA_lig_AcsA"/>
    <property type="match status" value="1"/>
</dbReference>
<dbReference type="NCBIfam" id="NF001208">
    <property type="entry name" value="PRK00174.1"/>
    <property type="match status" value="1"/>
</dbReference>
<dbReference type="PANTHER" id="PTHR24095">
    <property type="entry name" value="ACETYL-COENZYME A SYNTHETASE"/>
    <property type="match status" value="1"/>
</dbReference>
<dbReference type="PANTHER" id="PTHR24095:SF14">
    <property type="entry name" value="ACETYL-COENZYME A SYNTHETASE 1"/>
    <property type="match status" value="1"/>
</dbReference>
<dbReference type="Pfam" id="PF16177">
    <property type="entry name" value="ACAS_N"/>
    <property type="match status" value="1"/>
</dbReference>
<dbReference type="Pfam" id="PF00501">
    <property type="entry name" value="AMP-binding"/>
    <property type="match status" value="1"/>
</dbReference>
<dbReference type="Pfam" id="PF13193">
    <property type="entry name" value="AMP-binding_C"/>
    <property type="match status" value="1"/>
</dbReference>
<dbReference type="SUPFAM" id="SSF56801">
    <property type="entry name" value="Acetyl-CoA synthetase-like"/>
    <property type="match status" value="1"/>
</dbReference>
<dbReference type="PROSITE" id="PS00455">
    <property type="entry name" value="AMP_BINDING"/>
    <property type="match status" value="1"/>
</dbReference>
<name>ACSA_RHIEC</name>
<comment type="function">
    <text evidence="1">Catalyzes the conversion of acetate into acetyl-CoA (AcCoA), an essential intermediate at the junction of anabolic and catabolic pathways. AcsA undergoes a two-step reaction. In the first half reaction, AcsA combines acetate with ATP to form acetyl-adenylate (AcAMP) intermediate. In the second half reaction, it can then transfer the acetyl group from AcAMP to the sulfhydryl group of CoA, forming the product AcCoA.</text>
</comment>
<comment type="catalytic activity">
    <reaction evidence="1">
        <text>acetate + ATP + CoA = acetyl-CoA + AMP + diphosphate</text>
        <dbReference type="Rhea" id="RHEA:23176"/>
        <dbReference type="ChEBI" id="CHEBI:30089"/>
        <dbReference type="ChEBI" id="CHEBI:30616"/>
        <dbReference type="ChEBI" id="CHEBI:33019"/>
        <dbReference type="ChEBI" id="CHEBI:57287"/>
        <dbReference type="ChEBI" id="CHEBI:57288"/>
        <dbReference type="ChEBI" id="CHEBI:456215"/>
        <dbReference type="EC" id="6.2.1.1"/>
    </reaction>
</comment>
<comment type="cofactor">
    <cofactor evidence="1">
        <name>Mg(2+)</name>
        <dbReference type="ChEBI" id="CHEBI:18420"/>
    </cofactor>
</comment>
<comment type="PTM">
    <text evidence="1">Acetylated. Deacetylation by the SIR2-homolog deacetylase activates the enzyme.</text>
</comment>
<comment type="similarity">
    <text evidence="1">Belongs to the ATP-dependent AMP-binding enzyme family.</text>
</comment>
<keyword id="KW-0007">Acetylation</keyword>
<keyword id="KW-0067">ATP-binding</keyword>
<keyword id="KW-0436">Ligase</keyword>
<keyword id="KW-0460">Magnesium</keyword>
<keyword id="KW-0479">Metal-binding</keyword>
<keyword id="KW-0547">Nucleotide-binding</keyword>
<keyword id="KW-1185">Reference proteome</keyword>